<organism>
    <name type="scientific">Rickettsia rickettsii (strain Sheila Smith)</name>
    <dbReference type="NCBI Taxonomy" id="392021"/>
    <lineage>
        <taxon>Bacteria</taxon>
        <taxon>Pseudomonadati</taxon>
        <taxon>Pseudomonadota</taxon>
        <taxon>Alphaproteobacteria</taxon>
        <taxon>Rickettsiales</taxon>
        <taxon>Rickettsiaceae</taxon>
        <taxon>Rickettsieae</taxon>
        <taxon>Rickettsia</taxon>
        <taxon>spotted fever group</taxon>
    </lineage>
</organism>
<proteinExistence type="inferred from homology"/>
<sequence>MKKLLLIAATSATILSSSVSFAEGMDHEWYLRIDTGAAMFNEEKDKATGVKLKSNTTVPVALGIGYYISENFRADLTLGTIIGGKLKKSGAATNAPFTRTNVSASHKPTITRLLINGYVDLTNFDMFDVFAGAGVGPALVKEKITYNGITGLSSNTKNRTNISYKLTLGTSAQIVDGVKVELAYSWIDDGRTKSKNVIYQGTSVPTGGMHYQSHNLTAGIRFDI</sequence>
<dbReference type="EMBL" id="CP000848">
    <property type="protein sequence ID" value="ABV76851.1"/>
    <property type="molecule type" value="Genomic_DNA"/>
</dbReference>
<dbReference type="RefSeq" id="WP_012151391.1">
    <property type="nucleotide sequence ID" value="NZ_CP121767.1"/>
</dbReference>
<dbReference type="GeneID" id="79937884"/>
<dbReference type="KEGG" id="rri:A1G_07050"/>
<dbReference type="HOGENOM" id="CLU_1146500_0_0_5"/>
<dbReference type="Proteomes" id="UP000006832">
    <property type="component" value="Chromosome"/>
</dbReference>
<dbReference type="Gene3D" id="2.40.160.20">
    <property type="match status" value="1"/>
</dbReference>
<dbReference type="InterPro" id="IPR011250">
    <property type="entry name" value="OMP/PagP_b-brl"/>
</dbReference>
<dbReference type="InterPro" id="IPR027385">
    <property type="entry name" value="OMP_b-brl"/>
</dbReference>
<dbReference type="Pfam" id="PF13505">
    <property type="entry name" value="OMP_b-brl"/>
    <property type="match status" value="1"/>
</dbReference>
<dbReference type="SUPFAM" id="SSF56925">
    <property type="entry name" value="OMPA-like"/>
    <property type="match status" value="1"/>
</dbReference>
<keyword id="KW-0732">Signal</keyword>
<name>Y7050_RICRS</name>
<reference key="1">
    <citation type="submission" date="2007-09" db="EMBL/GenBank/DDBJ databases">
        <title>Complete genome sequence of Rickettsia rickettsii.</title>
        <authorList>
            <person name="Madan A."/>
            <person name="Fahey J."/>
            <person name="Helton E."/>
            <person name="Ketteman M."/>
            <person name="Madan A."/>
            <person name="Rodrigues S."/>
            <person name="Sanchez A."/>
            <person name="Dasch G."/>
            <person name="Eremeeva M."/>
        </authorList>
    </citation>
    <scope>NUCLEOTIDE SEQUENCE [LARGE SCALE GENOMIC DNA]</scope>
    <source>
        <strain>Sheila Smith</strain>
    </source>
</reference>
<accession>A8GTX6</accession>
<gene>
    <name type="ordered locus">A1G_07050</name>
</gene>
<evidence type="ECO:0000255" key="1"/>
<feature type="signal peptide" evidence="1">
    <location>
        <begin position="1"/>
        <end position="22"/>
    </location>
</feature>
<feature type="chain" id="PRO_0000317026" description="Putative adhesin A1G_07050">
    <location>
        <begin position="23"/>
        <end position="224"/>
    </location>
</feature>
<protein>
    <recommendedName>
        <fullName>Putative adhesin A1G_07050</fullName>
    </recommendedName>
</protein>